<keyword id="KW-0012">Acyltransferase</keyword>
<keyword id="KW-0963">Cytoplasm</keyword>
<keyword id="KW-0443">Lipid metabolism</keyword>
<keyword id="KW-0663">Pyridoxal phosphate</keyword>
<keyword id="KW-0808">Transferase</keyword>
<comment type="function">
    <text evidence="2">Catalyzes the condensation of L-serine with palmitoyl-CoA (hexadecanoyl-CoA) to produce 3-oxosphinganine.</text>
</comment>
<comment type="catalytic activity">
    <reaction evidence="2">
        <text>L-serine + hexadecanoyl-CoA + H(+) = 3-oxosphinganine + CO2 + CoA</text>
        <dbReference type="Rhea" id="RHEA:14761"/>
        <dbReference type="ChEBI" id="CHEBI:15378"/>
        <dbReference type="ChEBI" id="CHEBI:16526"/>
        <dbReference type="ChEBI" id="CHEBI:33384"/>
        <dbReference type="ChEBI" id="CHEBI:57287"/>
        <dbReference type="ChEBI" id="CHEBI:57379"/>
        <dbReference type="ChEBI" id="CHEBI:58299"/>
        <dbReference type="EC" id="2.3.1.50"/>
    </reaction>
    <physiologicalReaction direction="left-to-right" evidence="2">
        <dbReference type="Rhea" id="RHEA:14762"/>
    </physiologicalReaction>
</comment>
<comment type="cofactor">
    <cofactor evidence="2">
        <name>pyridoxal 5'-phosphate</name>
        <dbReference type="ChEBI" id="CHEBI:597326"/>
    </cofactor>
</comment>
<comment type="biophysicochemical properties">
    <kinetics>
        <KM evidence="2">5 mM for L-serine</KM>
        <KM evidence="2">0.39 mM for palmitoyl-CoA</KM>
        <text evidence="2">kcat is 0.15 sec(-1).</text>
    </kinetics>
    <phDependence>
        <text evidence="2">Optimum pH is 7.0 to 8.0.</text>
    </phDependence>
</comment>
<comment type="pathway">
    <text evidence="5">Lipid metabolism; sphingolipid metabolism.</text>
</comment>
<comment type="subunit">
    <text evidence="2">Homodimer.</text>
</comment>
<comment type="subcellular location">
    <subcellularLocation>
        <location evidence="4">Cytoplasm</location>
    </subcellularLocation>
</comment>
<comment type="similarity">
    <text evidence="4">Belongs to the class-II pyridoxal-phosphate-dependent aminotransferase family.</text>
</comment>
<organism>
    <name type="scientific">Sphingobacterium spiritivorum</name>
    <name type="common">Flavobacterium spiritivorum</name>
    <dbReference type="NCBI Taxonomy" id="258"/>
    <lineage>
        <taxon>Bacteria</taxon>
        <taxon>Pseudomonadati</taxon>
        <taxon>Bacteroidota</taxon>
        <taxon>Sphingobacteriia</taxon>
        <taxon>Sphingobacteriales</taxon>
        <taxon>Sphingobacteriaceae</taxon>
        <taxon>Sphingobacterium</taxon>
    </lineage>
</organism>
<evidence type="ECO:0000250" key="1">
    <source>
        <dbReference type="UniProtKB" id="Q93UV0"/>
    </source>
</evidence>
<evidence type="ECO:0000269" key="2">
    <source>
    </source>
</evidence>
<evidence type="ECO:0000303" key="3">
    <source>
    </source>
</evidence>
<evidence type="ECO:0000305" key="4"/>
<evidence type="ECO:0000305" key="5">
    <source>
    </source>
</evidence>
<reference key="1">
    <citation type="journal article" date="2007" name="J. Bacteriol.">
        <title>Molecular characterization of membrane-associated soluble serine palmitoyltransferases from Sphingobacterium multivorum and Bdellovibrio stolpii.</title>
        <authorList>
            <person name="Ikushiro H."/>
            <person name="Islam M.M."/>
            <person name="Tojo H."/>
            <person name="Hayashi H."/>
        </authorList>
    </citation>
    <scope>NUCLEOTIDE SEQUENCE [GENOMIC DNA]</scope>
    <scope>FUNCTION</scope>
    <scope>CATALYTIC ACTIVITY</scope>
    <scope>COFACTOR</scope>
    <scope>BIOPHYSICOCHEMICAL PROPERTIES</scope>
    <scope>SUBUNIT</scope>
    <source>
        <strain>EY3101</strain>
    </source>
</reference>
<protein>
    <recommendedName>
        <fullName evidence="3">Serine palmitoyltransferase</fullName>
        <shortName evidence="3">SPT</shortName>
        <ecNumber evidence="2">2.3.1.50</ecNumber>
    </recommendedName>
</protein>
<dbReference type="EC" id="2.3.1.50" evidence="2"/>
<dbReference type="EMBL" id="AB259215">
    <property type="protein sequence ID" value="BAF73752.1"/>
    <property type="molecule type" value="Genomic_DNA"/>
</dbReference>
<dbReference type="RefSeq" id="WP_003000371.1">
    <property type="nucleotide sequence ID" value="NZ_UGYY01000002.1"/>
</dbReference>
<dbReference type="SMR" id="A7BFV7"/>
<dbReference type="GeneID" id="95428198"/>
<dbReference type="BRENDA" id="2.3.1.50">
    <property type="organism ID" value="10090"/>
</dbReference>
<dbReference type="UniPathway" id="UPA00222"/>
<dbReference type="GO" id="GO:0005737">
    <property type="term" value="C:cytoplasm"/>
    <property type="evidence" value="ECO:0007669"/>
    <property type="project" value="UniProtKB-SubCell"/>
</dbReference>
<dbReference type="GO" id="GO:0016020">
    <property type="term" value="C:membrane"/>
    <property type="evidence" value="ECO:0007669"/>
    <property type="project" value="GOC"/>
</dbReference>
<dbReference type="GO" id="GO:0030170">
    <property type="term" value="F:pyridoxal phosphate binding"/>
    <property type="evidence" value="ECO:0007669"/>
    <property type="project" value="InterPro"/>
</dbReference>
<dbReference type="GO" id="GO:0004758">
    <property type="term" value="F:serine C-palmitoyltransferase activity"/>
    <property type="evidence" value="ECO:0007669"/>
    <property type="project" value="UniProtKB-EC"/>
</dbReference>
<dbReference type="GO" id="GO:0009058">
    <property type="term" value="P:biosynthetic process"/>
    <property type="evidence" value="ECO:0007669"/>
    <property type="project" value="InterPro"/>
</dbReference>
<dbReference type="GO" id="GO:0006665">
    <property type="term" value="P:sphingolipid metabolic process"/>
    <property type="evidence" value="ECO:0007669"/>
    <property type="project" value="UniProtKB-UniPathway"/>
</dbReference>
<dbReference type="CDD" id="cd06454">
    <property type="entry name" value="KBL_like"/>
    <property type="match status" value="1"/>
</dbReference>
<dbReference type="Gene3D" id="3.90.1150.10">
    <property type="entry name" value="Aspartate Aminotransferase, domain 1"/>
    <property type="match status" value="1"/>
</dbReference>
<dbReference type="Gene3D" id="3.40.640.10">
    <property type="entry name" value="Type I PLP-dependent aspartate aminotransferase-like (Major domain)"/>
    <property type="match status" value="1"/>
</dbReference>
<dbReference type="InterPro" id="IPR001917">
    <property type="entry name" value="Aminotrans_II_pyridoxalP_BS"/>
</dbReference>
<dbReference type="InterPro" id="IPR004839">
    <property type="entry name" value="Aminotransferase_I/II_large"/>
</dbReference>
<dbReference type="InterPro" id="IPR050087">
    <property type="entry name" value="AON_synthase_class-II"/>
</dbReference>
<dbReference type="InterPro" id="IPR015424">
    <property type="entry name" value="PyrdxlP-dep_Trfase"/>
</dbReference>
<dbReference type="InterPro" id="IPR015421">
    <property type="entry name" value="PyrdxlP-dep_Trfase_major"/>
</dbReference>
<dbReference type="InterPro" id="IPR015422">
    <property type="entry name" value="PyrdxlP-dep_Trfase_small"/>
</dbReference>
<dbReference type="NCBIfam" id="NF047600">
    <property type="entry name" value="SerpalmtaseCFB"/>
    <property type="match status" value="1"/>
</dbReference>
<dbReference type="PANTHER" id="PTHR13693">
    <property type="entry name" value="CLASS II AMINOTRANSFERASE/8-AMINO-7-OXONONANOATE SYNTHASE"/>
    <property type="match status" value="1"/>
</dbReference>
<dbReference type="PANTHER" id="PTHR13693:SF3">
    <property type="entry name" value="LD36009P"/>
    <property type="match status" value="1"/>
</dbReference>
<dbReference type="Pfam" id="PF00155">
    <property type="entry name" value="Aminotran_1_2"/>
    <property type="match status" value="1"/>
</dbReference>
<dbReference type="SUPFAM" id="SSF53383">
    <property type="entry name" value="PLP-dependent transferases"/>
    <property type="match status" value="1"/>
</dbReference>
<dbReference type="PROSITE" id="PS00599">
    <property type="entry name" value="AA_TRANSFER_CLASS_2"/>
    <property type="match status" value="1"/>
</dbReference>
<sequence>MSKGKLSERISHFNIVEELKSKGLYAYFRPIQSKQDTEVMIDGKRVLMFGSNSYLGLTIDPRIIEAAQDALSKYGTGCAGSRFLNGTLDIHIELEHKLSQLVGKEASILFSTGFQSNLGPISCLMGRNDYILLDERDHASIIDGSRLSFSKVIKYGHNDMDDLRAKLSRLPSESAKLIVTDGIFSMEGDIVNLPEMVKIADEYDAALMVDDAHSLGVIGEHGAGTASHFGLTDKVDLIMGTFSKSLASLGGFVAGDADVIDYLKHNARSVMFSASMTPASVASTLKALEIMISEPEHMENLWKNTNYAKQQLLESGFDLGATESPILPIFIRNNEKTFWVTKMLQDDGVFVNPVVSPAVPSEESLIRFSLMATHTFDQIDEAVEKMVRVFKQAEIESLI</sequence>
<proteinExistence type="evidence at protein level"/>
<name>SPT_SPHSI</name>
<accession>A7BFV7</accession>
<gene>
    <name evidence="3" type="primary">spt</name>
</gene>
<feature type="chain" id="PRO_0000456079" description="Serine palmitoyltransferase">
    <location>
        <begin position="1"/>
        <end position="399"/>
    </location>
</feature>
<feature type="binding site" evidence="1">
    <location>
        <begin position="113"/>
        <end position="114"/>
    </location>
    <ligand>
        <name>pyridoxal 5'-phosphate</name>
        <dbReference type="ChEBI" id="CHEBI:597326"/>
    </ligand>
</feature>
<feature type="binding site" evidence="1">
    <location>
        <position position="213"/>
    </location>
    <ligand>
        <name>pyridoxal 5'-phosphate</name>
        <dbReference type="ChEBI" id="CHEBI:597326"/>
    </ligand>
</feature>
<feature type="binding site" evidence="1">
    <location>
        <position position="241"/>
    </location>
    <ligand>
        <name>pyridoxal 5'-phosphate</name>
        <dbReference type="ChEBI" id="CHEBI:597326"/>
    </ligand>
</feature>
<feature type="binding site" evidence="1">
    <location>
        <position position="243"/>
    </location>
    <ligand>
        <name>pyridoxal 5'-phosphate</name>
        <dbReference type="ChEBI" id="CHEBI:597326"/>
    </ligand>
</feature>
<feature type="modified residue" description="N6-(pyridoxal phosphate)lysine" evidence="1">
    <location>
        <position position="244"/>
    </location>
</feature>